<sequence length="770" mass="86634">MDNVVDPWYINPSGFAKDTQDEEYVQHHDNVNPTIPPPDNYILNNENDDGLDNLLGMDYYNIDDLLTQELRDLDIPLVPSPKTGDGSSDKKNIDRTWNLGDENNKVSHYSKKSMSSHKRGLSGTAIFGFLGHNKTLSISSLQQSILNMSKDPQPMELINELGNHNTVKNNNDDFDHIRENDGENSYLSQVLLKQQEELRIALEKQKEVNEKLEKQLRDNQIQQEKLRKVLEEQEEVAQKLVSGATNSNSKPGSPVILKTPAMQNGRMKDNAIIVTTNSANGGYQFPPPTLISPRMSNTSINGSPSRKYHRQRYPNKSPESNGLNLFSSNSGYLRDSELLSFSPQNYNLNLDGLTYNDHNNTSDKNNNDKKNSTGDNIFRLFEKTSPGGLSISPRINGNSLRSPFLVGTDKSRDDRYAAGTFTPRTQLSPIHKKRESVVSTVSTISQLQDDTEPIHMRNTQNPTLRNANALASSSVLPPIPGSSNNTPIKNSLPQKHVFQHTPVKAPPKNGSNLAPLLNAPDLTDHQLEIKTPIRNNSHCEVESYPQVPPVTHDIHKSPTLHSTSPLPDEIIPRTTPMKITKKPTTLPPGTIDQYVKELPDKLFECLYPNCNKVFKRRYNIRSHIQTHLQDRPYSCDFPGCTKAFVRNHDLIRHKISHNAKKYICPCGKRFNREDALMVHRSRMICTGGKKLEHSINKKLTSPKKSLLDSPHDTSPVKETIARDKDGSVLMKMEEQLRDDMRKHGLLDPPPSTAAHEQNSNRTLSNETDAL</sequence>
<comment type="function">
    <text>Plays a role in regulating basal-level expression of CUP1. Activates EGT2 transcription in the absence of SWI5.</text>
</comment>
<comment type="interaction">
    <interactant intactId="EBI-2073">
        <id>P21192</id>
    </interactant>
    <interactant intactId="EBI-4110">
        <id>P53894</id>
        <label>CBK1</label>
    </interactant>
    <organismsDiffer>false</organismsDiffer>
    <experiments>3</experiments>
</comment>
<comment type="interaction">
    <interactant intactId="EBI-2073">
        <id>P21192</id>
    </interactant>
    <interactant intactId="EBI-20589">
        <id>P30822</id>
        <label>CRM1</label>
    </interactant>
    <organismsDiffer>false</organismsDiffer>
    <experiments>3</experiments>
</comment>
<comment type="subcellular location">
    <subcellularLocation>
        <location>Nucleus</location>
    </subcellularLocation>
</comment>
<comment type="miscellaneous">
    <text evidence="3">Present with 538 molecules/cell in log phase SD medium.</text>
</comment>
<protein>
    <recommendedName>
        <fullName>Metallothionein expression activator</fullName>
    </recommendedName>
</protein>
<organism>
    <name type="scientific">Saccharomyces cerevisiae (strain ATCC 204508 / S288c)</name>
    <name type="common">Baker's yeast</name>
    <dbReference type="NCBI Taxonomy" id="559292"/>
    <lineage>
        <taxon>Eukaryota</taxon>
        <taxon>Fungi</taxon>
        <taxon>Dikarya</taxon>
        <taxon>Ascomycota</taxon>
        <taxon>Saccharomycotina</taxon>
        <taxon>Saccharomycetes</taxon>
        <taxon>Saccharomycetales</taxon>
        <taxon>Saccharomycetaceae</taxon>
        <taxon>Saccharomyces</taxon>
    </lineage>
</organism>
<evidence type="ECO:0000255" key="1">
    <source>
        <dbReference type="PROSITE-ProRule" id="PRU00042"/>
    </source>
</evidence>
<evidence type="ECO:0000256" key="2">
    <source>
        <dbReference type="SAM" id="MobiDB-lite"/>
    </source>
</evidence>
<evidence type="ECO:0000269" key="3">
    <source>
    </source>
</evidence>
<evidence type="ECO:0007744" key="4">
    <source>
    </source>
</evidence>
<evidence type="ECO:0007744" key="5">
    <source>
    </source>
</evidence>
<evidence type="ECO:0007744" key="6">
    <source>
    </source>
</evidence>
<evidence type="ECO:0007744" key="7">
    <source>
    </source>
</evidence>
<feature type="chain" id="PRO_0000046800" description="Metallothionein expression activator">
    <location>
        <begin position="1"/>
        <end position="770"/>
    </location>
</feature>
<feature type="zinc finger region" description="C2H2-type 1" evidence="1">
    <location>
        <begin position="603"/>
        <end position="627"/>
    </location>
</feature>
<feature type="zinc finger region" description="C2H2-type 2" evidence="1">
    <location>
        <begin position="633"/>
        <end position="657"/>
    </location>
</feature>
<feature type="zinc finger region" description="C2H2-type 3; atypical" evidence="1">
    <location>
        <begin position="662"/>
        <end position="685"/>
    </location>
</feature>
<feature type="region of interest" description="Disordered" evidence="2">
    <location>
        <begin position="77"/>
        <end position="97"/>
    </location>
</feature>
<feature type="region of interest" description="Disordered" evidence="2">
    <location>
        <begin position="286"/>
        <end position="323"/>
    </location>
</feature>
<feature type="region of interest" description="Disordered" evidence="2">
    <location>
        <begin position="699"/>
        <end position="770"/>
    </location>
</feature>
<feature type="compositionally biased region" description="Polar residues" evidence="2">
    <location>
        <begin position="294"/>
        <end position="304"/>
    </location>
</feature>
<feature type="compositionally biased region" description="Basic and acidic residues" evidence="2">
    <location>
        <begin position="705"/>
        <end position="745"/>
    </location>
</feature>
<feature type="compositionally biased region" description="Polar residues" evidence="2">
    <location>
        <begin position="754"/>
        <end position="770"/>
    </location>
</feature>
<feature type="modified residue" description="Phosphoserine" evidence="4 5 7">
    <location>
        <position position="80"/>
    </location>
</feature>
<feature type="modified residue" description="Phosphoserine" evidence="4">
    <location>
        <position position="122"/>
    </location>
</feature>
<feature type="modified residue" description="Phosphoserine" evidence="7">
    <location>
        <position position="247"/>
    </location>
</feature>
<feature type="modified residue" description="Phosphoserine" evidence="7">
    <location>
        <position position="249"/>
    </location>
</feature>
<feature type="modified residue" description="Phosphoserine" evidence="7">
    <location>
        <position position="253"/>
    </location>
</feature>
<feature type="modified residue" description="Phosphothreonine" evidence="7">
    <location>
        <position position="259"/>
    </location>
</feature>
<feature type="modified residue" description="Phosphoserine" evidence="7">
    <location>
        <position position="385"/>
    </location>
</feature>
<feature type="modified residue" description="Phosphoserine" evidence="7">
    <location>
        <position position="392"/>
    </location>
</feature>
<feature type="modified residue" description="Phosphoserine" evidence="7">
    <location>
        <position position="483"/>
    </location>
</feature>
<feature type="modified residue" description="Phosphothreonine" evidence="7">
    <location>
        <position position="486"/>
    </location>
</feature>
<feature type="modified residue" description="Phosphothreonine" evidence="7">
    <location>
        <position position="501"/>
    </location>
</feature>
<feature type="modified residue" description="Phosphoserine" evidence="7">
    <location>
        <position position="564"/>
    </location>
</feature>
<feature type="modified residue" description="Phosphoserine" evidence="6">
    <location>
        <position position="709"/>
    </location>
</feature>
<feature type="modified residue" description="Phosphoserine" evidence="7">
    <location>
        <position position="714"/>
    </location>
</feature>
<accession>P21192</accession>
<accession>D6VYC6</accession>
<proteinExistence type="evidence at protein level"/>
<reference key="1">
    <citation type="journal article" date="1991" name="Mol. Cell. Biol.">
        <title>ACE2, an activator of yeast metallothionein expression which is homologous to SWI5.</title>
        <authorList>
            <person name="Butler G."/>
            <person name="Thiele D.J."/>
        </authorList>
    </citation>
    <scope>NUCLEOTIDE SEQUENCE [GENOMIC DNA]</scope>
    <source>
        <strain>DBY939</strain>
    </source>
</reference>
<reference key="2">
    <citation type="journal article" date="1997" name="Nature">
        <title>The nucleotide sequence of Saccharomyces cerevisiae chromosome XII.</title>
        <authorList>
            <person name="Johnston M."/>
            <person name="Hillier L.W."/>
            <person name="Riles L."/>
            <person name="Albermann K."/>
            <person name="Andre B."/>
            <person name="Ansorge W."/>
            <person name="Benes V."/>
            <person name="Brueckner M."/>
            <person name="Delius H."/>
            <person name="Dubois E."/>
            <person name="Duesterhoeft A."/>
            <person name="Entian K.-D."/>
            <person name="Floeth M."/>
            <person name="Goffeau A."/>
            <person name="Hebling U."/>
            <person name="Heumann K."/>
            <person name="Heuss-Neitzel D."/>
            <person name="Hilbert H."/>
            <person name="Hilger F."/>
            <person name="Kleine K."/>
            <person name="Koetter P."/>
            <person name="Louis E.J."/>
            <person name="Messenguy F."/>
            <person name="Mewes H.-W."/>
            <person name="Miosga T."/>
            <person name="Moestl D."/>
            <person name="Mueller-Auer S."/>
            <person name="Nentwich U."/>
            <person name="Obermaier B."/>
            <person name="Piravandi E."/>
            <person name="Pohl T.M."/>
            <person name="Portetelle D."/>
            <person name="Purnelle B."/>
            <person name="Rechmann S."/>
            <person name="Rieger M."/>
            <person name="Rinke M."/>
            <person name="Rose M."/>
            <person name="Scharfe M."/>
            <person name="Scherens B."/>
            <person name="Scholler P."/>
            <person name="Schwager C."/>
            <person name="Schwarz S."/>
            <person name="Underwood A.P."/>
            <person name="Urrestarazu L.A."/>
            <person name="Vandenbol M."/>
            <person name="Verhasselt P."/>
            <person name="Vierendeels F."/>
            <person name="Voet M."/>
            <person name="Volckaert G."/>
            <person name="Voss H."/>
            <person name="Wambutt R."/>
            <person name="Wedler E."/>
            <person name="Wedler H."/>
            <person name="Zimmermann F.K."/>
            <person name="Zollner A."/>
            <person name="Hani J."/>
            <person name="Hoheisel J.D."/>
        </authorList>
    </citation>
    <scope>NUCLEOTIDE SEQUENCE [LARGE SCALE GENOMIC DNA]</scope>
    <source>
        <strain>ATCC 204508 / S288c</strain>
    </source>
</reference>
<reference key="3">
    <citation type="journal article" date="2014" name="G3 (Bethesda)">
        <title>The reference genome sequence of Saccharomyces cerevisiae: Then and now.</title>
        <authorList>
            <person name="Engel S.R."/>
            <person name="Dietrich F.S."/>
            <person name="Fisk D.G."/>
            <person name="Binkley G."/>
            <person name="Balakrishnan R."/>
            <person name="Costanzo M.C."/>
            <person name="Dwight S.S."/>
            <person name="Hitz B.C."/>
            <person name="Karra K."/>
            <person name="Nash R.S."/>
            <person name="Weng S."/>
            <person name="Wong E.D."/>
            <person name="Lloyd P."/>
            <person name="Skrzypek M.S."/>
            <person name="Miyasato S.R."/>
            <person name="Simison M."/>
            <person name="Cherry J.M."/>
        </authorList>
    </citation>
    <scope>GENOME REANNOTATION</scope>
    <source>
        <strain>ATCC 204508 / S288c</strain>
    </source>
</reference>
<reference key="4">
    <citation type="journal article" date="2003" name="Nature">
        <title>Global analysis of protein expression in yeast.</title>
        <authorList>
            <person name="Ghaemmaghami S."/>
            <person name="Huh W.-K."/>
            <person name="Bower K."/>
            <person name="Howson R.W."/>
            <person name="Belle A."/>
            <person name="Dephoure N."/>
            <person name="O'Shea E.K."/>
            <person name="Weissman J.S."/>
        </authorList>
    </citation>
    <scope>LEVEL OF PROTEIN EXPRESSION [LARGE SCALE ANALYSIS]</scope>
</reference>
<reference key="5">
    <citation type="journal article" date="2005" name="Mol. Cell. Proteomics">
        <title>Quantitative phosphoproteomics applied to the yeast pheromone signaling pathway.</title>
        <authorList>
            <person name="Gruhler A."/>
            <person name="Olsen J.V."/>
            <person name="Mohammed S."/>
            <person name="Mortensen P."/>
            <person name="Faergeman N.J."/>
            <person name="Mann M."/>
            <person name="Jensen O.N."/>
        </authorList>
    </citation>
    <scope>PHOSPHORYLATION [LARGE SCALE ANALYSIS] AT SER-80 AND SER-122</scope>
    <scope>IDENTIFICATION BY MASS SPECTROMETRY [LARGE SCALE ANALYSIS]</scope>
    <source>
        <strain>YAL6B</strain>
    </source>
</reference>
<reference key="6">
    <citation type="journal article" date="2007" name="J. Proteome Res.">
        <title>Large-scale phosphorylation analysis of alpha-factor-arrested Saccharomyces cerevisiae.</title>
        <authorList>
            <person name="Li X."/>
            <person name="Gerber S.A."/>
            <person name="Rudner A.D."/>
            <person name="Beausoleil S.A."/>
            <person name="Haas W."/>
            <person name="Villen J."/>
            <person name="Elias J.E."/>
            <person name="Gygi S.P."/>
        </authorList>
    </citation>
    <scope>PHOSPHORYLATION [LARGE SCALE ANALYSIS] AT SER-80</scope>
    <scope>IDENTIFICATION BY MASS SPECTROMETRY [LARGE SCALE ANALYSIS]</scope>
    <source>
        <strain>ADR376</strain>
    </source>
</reference>
<reference key="7">
    <citation type="journal article" date="2007" name="Proc. Natl. Acad. Sci. U.S.A.">
        <title>Analysis of phosphorylation sites on proteins from Saccharomyces cerevisiae by electron transfer dissociation (ETD) mass spectrometry.</title>
        <authorList>
            <person name="Chi A."/>
            <person name="Huttenhower C."/>
            <person name="Geer L.Y."/>
            <person name="Coon J.J."/>
            <person name="Syka J.E.P."/>
            <person name="Bai D.L."/>
            <person name="Shabanowitz J."/>
            <person name="Burke D.J."/>
            <person name="Troyanskaya O.G."/>
            <person name="Hunt D.F."/>
        </authorList>
    </citation>
    <scope>IDENTIFICATION BY MASS SPECTROMETRY [LARGE SCALE ANALYSIS]</scope>
</reference>
<reference key="8">
    <citation type="journal article" date="2008" name="Mol. Cell. Proteomics">
        <title>A multidimensional chromatography technology for in-depth phosphoproteome analysis.</title>
        <authorList>
            <person name="Albuquerque C.P."/>
            <person name="Smolka M.B."/>
            <person name="Payne S.H."/>
            <person name="Bafna V."/>
            <person name="Eng J."/>
            <person name="Zhou H."/>
        </authorList>
    </citation>
    <scope>PHOSPHORYLATION [LARGE SCALE ANALYSIS] AT SER-709</scope>
    <scope>IDENTIFICATION BY MASS SPECTROMETRY [LARGE SCALE ANALYSIS]</scope>
</reference>
<reference key="9">
    <citation type="journal article" date="2009" name="Science">
        <title>Global analysis of Cdk1 substrate phosphorylation sites provides insights into evolution.</title>
        <authorList>
            <person name="Holt L.J."/>
            <person name="Tuch B.B."/>
            <person name="Villen J."/>
            <person name="Johnson A.D."/>
            <person name="Gygi S.P."/>
            <person name="Morgan D.O."/>
        </authorList>
    </citation>
    <scope>PHOSPHORYLATION [LARGE SCALE ANALYSIS] AT SER-80; SER-247; SER-249; SER-253; THR-259; SER-385; SER-392; SER-483; THR-486; THR-501; SER-564 AND SER-714</scope>
    <scope>IDENTIFICATION BY MASS SPECTROMETRY [LARGE SCALE ANALYSIS]</scope>
</reference>
<name>ACE2_YEAST</name>
<dbReference type="EMBL" id="M55619">
    <property type="protein sequence ID" value="AAA34387.1"/>
    <property type="molecule type" value="Genomic_DNA"/>
</dbReference>
<dbReference type="EMBL" id="X91258">
    <property type="protein sequence ID" value="CAA62643.1"/>
    <property type="molecule type" value="Genomic_DNA"/>
</dbReference>
<dbReference type="EMBL" id="Z73303">
    <property type="protein sequence ID" value="CAA97702.1"/>
    <property type="molecule type" value="Genomic_DNA"/>
</dbReference>
<dbReference type="EMBL" id="U53881">
    <property type="protein sequence ID" value="AAB82398.1"/>
    <property type="molecule type" value="Genomic_DNA"/>
</dbReference>
<dbReference type="EMBL" id="BK006945">
    <property type="protein sequence ID" value="DAA09442.1"/>
    <property type="molecule type" value="Genomic_DNA"/>
</dbReference>
<dbReference type="PIR" id="S12943">
    <property type="entry name" value="TWBYA2"/>
</dbReference>
<dbReference type="RefSeq" id="NP_013232.1">
    <property type="nucleotide sequence ID" value="NM_001182018.1"/>
</dbReference>
<dbReference type="BioGRID" id="31400">
    <property type="interactions" value="436"/>
</dbReference>
<dbReference type="DIP" id="DIP-2012N"/>
<dbReference type="ELM" id="P21192"/>
<dbReference type="FunCoup" id="P21192">
    <property type="interactions" value="825"/>
</dbReference>
<dbReference type="IntAct" id="P21192">
    <property type="interactions" value="9"/>
</dbReference>
<dbReference type="MINT" id="P21192"/>
<dbReference type="STRING" id="4932.YLR131C"/>
<dbReference type="GlyGen" id="P21192">
    <property type="glycosylation" value="3 sites, 1 O-linked glycan (3 sites)"/>
</dbReference>
<dbReference type="iPTMnet" id="P21192"/>
<dbReference type="PaxDb" id="4932-YLR131C"/>
<dbReference type="PeptideAtlas" id="P21192"/>
<dbReference type="EnsemblFungi" id="YLR131C_mRNA">
    <property type="protein sequence ID" value="YLR131C"/>
    <property type="gene ID" value="YLR131C"/>
</dbReference>
<dbReference type="GeneID" id="850822"/>
<dbReference type="KEGG" id="sce:YLR131C"/>
<dbReference type="AGR" id="SGD:S000004121"/>
<dbReference type="SGD" id="S000004121">
    <property type="gene designation" value="ACE2"/>
</dbReference>
<dbReference type="VEuPathDB" id="FungiDB:YLR131C"/>
<dbReference type="eggNOG" id="KOG1721">
    <property type="taxonomic scope" value="Eukaryota"/>
</dbReference>
<dbReference type="GeneTree" id="ENSGT00940000176710"/>
<dbReference type="HOGENOM" id="CLU_021006_0_0_1"/>
<dbReference type="InParanoid" id="P21192"/>
<dbReference type="OMA" id="FQHTPTK"/>
<dbReference type="OrthoDB" id="3437960at2759"/>
<dbReference type="BioCyc" id="YEAST:G3O-32273-MONOMER"/>
<dbReference type="BioGRID-ORCS" id="850822">
    <property type="hits" value="2 hits in 13 CRISPR screens"/>
</dbReference>
<dbReference type="PRO" id="PR:P21192"/>
<dbReference type="Proteomes" id="UP000002311">
    <property type="component" value="Chromosome XII"/>
</dbReference>
<dbReference type="RNAct" id="P21192">
    <property type="molecule type" value="protein"/>
</dbReference>
<dbReference type="GO" id="GO:0005737">
    <property type="term" value="C:cytoplasm"/>
    <property type="evidence" value="ECO:0007005"/>
    <property type="project" value="SGD"/>
</dbReference>
<dbReference type="GO" id="GO:0005829">
    <property type="term" value="C:cytosol"/>
    <property type="evidence" value="ECO:0000314"/>
    <property type="project" value="SGD"/>
</dbReference>
<dbReference type="GO" id="GO:0005634">
    <property type="term" value="C:nucleus"/>
    <property type="evidence" value="ECO:0000314"/>
    <property type="project" value="SGD"/>
</dbReference>
<dbReference type="GO" id="GO:0000987">
    <property type="term" value="F:cis-regulatory region sequence-specific DNA binding"/>
    <property type="evidence" value="ECO:0000314"/>
    <property type="project" value="SGD"/>
</dbReference>
<dbReference type="GO" id="GO:0000981">
    <property type="term" value="F:DNA-binding transcription factor activity, RNA polymerase II-specific"/>
    <property type="evidence" value="ECO:0000315"/>
    <property type="project" value="SGD"/>
</dbReference>
<dbReference type="GO" id="GO:0000978">
    <property type="term" value="F:RNA polymerase II cis-regulatory region sequence-specific DNA binding"/>
    <property type="evidence" value="ECO:0000318"/>
    <property type="project" value="GO_Central"/>
</dbReference>
<dbReference type="GO" id="GO:0043565">
    <property type="term" value="F:sequence-specific DNA binding"/>
    <property type="evidence" value="ECO:0007005"/>
    <property type="project" value="SGD"/>
</dbReference>
<dbReference type="GO" id="GO:0008270">
    <property type="term" value="F:zinc ion binding"/>
    <property type="evidence" value="ECO:0007669"/>
    <property type="project" value="UniProtKB-KW"/>
</dbReference>
<dbReference type="GO" id="GO:0000082">
    <property type="term" value="P:G1/S transition of mitotic cell cycle"/>
    <property type="evidence" value="ECO:0000315"/>
    <property type="project" value="SGD"/>
</dbReference>
<dbReference type="GO" id="GO:0000122">
    <property type="term" value="P:negative regulation of transcription by RNA polymerase II"/>
    <property type="evidence" value="ECO:0000315"/>
    <property type="project" value="SGD"/>
</dbReference>
<dbReference type="GO" id="GO:0060196">
    <property type="term" value="P:positive regulation of antisense RNA transcription"/>
    <property type="evidence" value="ECO:0000315"/>
    <property type="project" value="SGD"/>
</dbReference>
<dbReference type="GO" id="GO:2001043">
    <property type="term" value="P:positive regulation of septum digestion after cytokinesis"/>
    <property type="evidence" value="ECO:0000315"/>
    <property type="project" value="SGD"/>
</dbReference>
<dbReference type="GO" id="GO:0045944">
    <property type="term" value="P:positive regulation of transcription by RNA polymerase II"/>
    <property type="evidence" value="ECO:0000315"/>
    <property type="project" value="SGD"/>
</dbReference>
<dbReference type="GO" id="GO:0006357">
    <property type="term" value="P:regulation of transcription by RNA polymerase II"/>
    <property type="evidence" value="ECO:0000315"/>
    <property type="project" value="SGD"/>
</dbReference>
<dbReference type="CDD" id="cd22249">
    <property type="entry name" value="UDM1_RNF168_RNF169-like"/>
    <property type="match status" value="1"/>
</dbReference>
<dbReference type="FunFam" id="3.30.160.60:FF:002021">
    <property type="entry name" value="Transcription factor"/>
    <property type="match status" value="1"/>
</dbReference>
<dbReference type="FunFam" id="3.30.160.60:FF:001752">
    <property type="entry name" value="Transcriptional factor SWI5"/>
    <property type="match status" value="1"/>
</dbReference>
<dbReference type="Gene3D" id="3.30.160.60">
    <property type="entry name" value="Classic Zinc Finger"/>
    <property type="match status" value="2"/>
</dbReference>
<dbReference type="InterPro" id="IPR050329">
    <property type="entry name" value="GLI_C2H2-zinc-finger"/>
</dbReference>
<dbReference type="InterPro" id="IPR036236">
    <property type="entry name" value="Znf_C2H2_sf"/>
</dbReference>
<dbReference type="InterPro" id="IPR013087">
    <property type="entry name" value="Znf_C2H2_type"/>
</dbReference>
<dbReference type="PANTHER" id="PTHR19818:SF144">
    <property type="entry name" value="METALLOTHIONEIN EXPRESSION ACTIVATOR-RELATED"/>
    <property type="match status" value="1"/>
</dbReference>
<dbReference type="PANTHER" id="PTHR19818">
    <property type="entry name" value="ZINC FINGER PROTEIN ZIC AND GLI"/>
    <property type="match status" value="1"/>
</dbReference>
<dbReference type="Pfam" id="PF00096">
    <property type="entry name" value="zf-C2H2"/>
    <property type="match status" value="2"/>
</dbReference>
<dbReference type="SMART" id="SM00355">
    <property type="entry name" value="ZnF_C2H2"/>
    <property type="match status" value="2"/>
</dbReference>
<dbReference type="SUPFAM" id="SSF57667">
    <property type="entry name" value="beta-beta-alpha zinc fingers"/>
    <property type="match status" value="2"/>
</dbReference>
<dbReference type="PROSITE" id="PS00028">
    <property type="entry name" value="ZINC_FINGER_C2H2_1"/>
    <property type="match status" value="2"/>
</dbReference>
<dbReference type="PROSITE" id="PS50157">
    <property type="entry name" value="ZINC_FINGER_C2H2_2"/>
    <property type="match status" value="2"/>
</dbReference>
<gene>
    <name type="primary">ACE2</name>
    <name type="ordered locus">YLR131C</name>
    <name type="ORF">L3123</name>
    <name type="ORF">L9606.10</name>
</gene>
<keyword id="KW-0010">Activator</keyword>
<keyword id="KW-0238">DNA-binding</keyword>
<keyword id="KW-0479">Metal-binding</keyword>
<keyword id="KW-0539">Nucleus</keyword>
<keyword id="KW-0597">Phosphoprotein</keyword>
<keyword id="KW-1185">Reference proteome</keyword>
<keyword id="KW-0677">Repeat</keyword>
<keyword id="KW-0804">Transcription</keyword>
<keyword id="KW-0805">Transcription regulation</keyword>
<keyword id="KW-0862">Zinc</keyword>
<keyword id="KW-0863">Zinc-finger</keyword>